<evidence type="ECO:0000255" key="1">
    <source>
        <dbReference type="HAMAP-Rule" id="MF_01014"/>
    </source>
</evidence>
<accession>B1W0M4</accession>
<keyword id="KW-0028">Amino-acid biosynthesis</keyword>
<keyword id="KW-0057">Aromatic amino acid biosynthesis</keyword>
<keyword id="KW-0963">Cytoplasm</keyword>
<keyword id="KW-0368">Histidine biosynthesis</keyword>
<keyword id="KW-0413">Isomerase</keyword>
<keyword id="KW-0822">Tryptophan biosynthesis</keyword>
<feature type="chain" id="PRO_1000190562" description="Phosphoribosyl isomerase A">
    <location>
        <begin position="1"/>
        <end position="241"/>
    </location>
</feature>
<feature type="active site" description="Proton acceptor" evidence="1">
    <location>
        <position position="11"/>
    </location>
</feature>
<feature type="active site" description="Proton donor" evidence="1">
    <location>
        <position position="130"/>
    </location>
</feature>
<gene>
    <name evidence="1" type="primary">priA</name>
    <name evidence="1" type="synonym">hisA</name>
    <name type="ordered locus">SGR_5455</name>
</gene>
<organism>
    <name type="scientific">Streptomyces griseus subsp. griseus (strain JCM 4626 / CBS 651.72 / NBRC 13350 / KCC S-0626 / ISP 5235)</name>
    <dbReference type="NCBI Taxonomy" id="455632"/>
    <lineage>
        <taxon>Bacteria</taxon>
        <taxon>Bacillati</taxon>
        <taxon>Actinomycetota</taxon>
        <taxon>Actinomycetes</taxon>
        <taxon>Kitasatosporales</taxon>
        <taxon>Streptomycetaceae</taxon>
        <taxon>Streptomyces</taxon>
    </lineage>
</organism>
<dbReference type="EC" id="5.3.1.16" evidence="1"/>
<dbReference type="EC" id="5.3.1.24" evidence="1"/>
<dbReference type="EMBL" id="AP009493">
    <property type="protein sequence ID" value="BAG22284.1"/>
    <property type="molecule type" value="Genomic_DNA"/>
</dbReference>
<dbReference type="RefSeq" id="WP_003969744.1">
    <property type="nucleotide sequence ID" value="NC_010572.1"/>
</dbReference>
<dbReference type="SMR" id="B1W0M4"/>
<dbReference type="KEGG" id="sgr:SGR_5455"/>
<dbReference type="eggNOG" id="COG0106">
    <property type="taxonomic scope" value="Bacteria"/>
</dbReference>
<dbReference type="HOGENOM" id="CLU_048577_1_1_11"/>
<dbReference type="UniPathway" id="UPA00031">
    <property type="reaction ID" value="UER00009"/>
</dbReference>
<dbReference type="UniPathway" id="UPA00035">
    <property type="reaction ID" value="UER00042"/>
</dbReference>
<dbReference type="Proteomes" id="UP000001685">
    <property type="component" value="Chromosome"/>
</dbReference>
<dbReference type="GO" id="GO:0005737">
    <property type="term" value="C:cytoplasm"/>
    <property type="evidence" value="ECO:0007669"/>
    <property type="project" value="UniProtKB-SubCell"/>
</dbReference>
<dbReference type="GO" id="GO:0003949">
    <property type="term" value="F:1-(5-phosphoribosyl)-5-[(5-phosphoribosylamino)methylideneamino]imidazole-4-carboxamide isomerase activity"/>
    <property type="evidence" value="ECO:0007669"/>
    <property type="project" value="UniProtKB-UniRule"/>
</dbReference>
<dbReference type="GO" id="GO:0004640">
    <property type="term" value="F:phosphoribosylanthranilate isomerase activity"/>
    <property type="evidence" value="ECO:0007669"/>
    <property type="project" value="UniProtKB-UniRule"/>
</dbReference>
<dbReference type="GO" id="GO:0000105">
    <property type="term" value="P:L-histidine biosynthetic process"/>
    <property type="evidence" value="ECO:0007669"/>
    <property type="project" value="UniProtKB-UniRule"/>
</dbReference>
<dbReference type="GO" id="GO:0000162">
    <property type="term" value="P:L-tryptophan biosynthetic process"/>
    <property type="evidence" value="ECO:0007669"/>
    <property type="project" value="UniProtKB-UniRule"/>
</dbReference>
<dbReference type="CDD" id="cd04732">
    <property type="entry name" value="HisA"/>
    <property type="match status" value="1"/>
</dbReference>
<dbReference type="FunFam" id="3.20.20.70:FF:000009">
    <property type="entry name" value="1-(5-phosphoribosyl)-5-[(5-phosphoribosylamino)methylideneamino] imidazole-4-carboxamide isomerase"/>
    <property type="match status" value="1"/>
</dbReference>
<dbReference type="Gene3D" id="3.20.20.70">
    <property type="entry name" value="Aldolase class I"/>
    <property type="match status" value="1"/>
</dbReference>
<dbReference type="HAMAP" id="MF_01014">
    <property type="entry name" value="HisA"/>
    <property type="match status" value="1"/>
</dbReference>
<dbReference type="InterPro" id="IPR013785">
    <property type="entry name" value="Aldolase_TIM"/>
</dbReference>
<dbReference type="InterPro" id="IPR006062">
    <property type="entry name" value="His_biosynth"/>
</dbReference>
<dbReference type="InterPro" id="IPR010188">
    <property type="entry name" value="HisA/PriA_Actinobacteria"/>
</dbReference>
<dbReference type="InterPro" id="IPR044524">
    <property type="entry name" value="Isoase_HisA-like"/>
</dbReference>
<dbReference type="InterPro" id="IPR023016">
    <property type="entry name" value="Isoase_HisA-like_bact"/>
</dbReference>
<dbReference type="InterPro" id="IPR011060">
    <property type="entry name" value="RibuloseP-bd_barrel"/>
</dbReference>
<dbReference type="NCBIfam" id="TIGR01919">
    <property type="entry name" value="hisA-trpF"/>
    <property type="match status" value="1"/>
</dbReference>
<dbReference type="PANTHER" id="PTHR43090">
    <property type="entry name" value="1-(5-PHOSPHORIBOSYL)-5-[(5-PHOSPHORIBOSYLAMINO)METHYLIDENEAMINO] IMIDAZOLE-4-CARBOXAMIDE ISOMERASE"/>
    <property type="match status" value="1"/>
</dbReference>
<dbReference type="PANTHER" id="PTHR43090:SF2">
    <property type="entry name" value="1-(5-PHOSPHORIBOSYL)-5-[(5-PHOSPHORIBOSYLAMINO)METHYLIDENEAMINO] IMIDAZOLE-4-CARBOXAMIDE ISOMERASE"/>
    <property type="match status" value="1"/>
</dbReference>
<dbReference type="Pfam" id="PF00977">
    <property type="entry name" value="His_biosynth"/>
    <property type="match status" value="1"/>
</dbReference>
<dbReference type="SUPFAM" id="SSF51366">
    <property type="entry name" value="Ribulose-phoshate binding barrel"/>
    <property type="match status" value="1"/>
</dbReference>
<protein>
    <recommendedName>
        <fullName evidence="1">Phosphoribosyl isomerase A</fullName>
    </recommendedName>
    <alternativeName>
        <fullName evidence="1">1-(5-phosphoribosyl)-5-[(5-phosphoribosylamino)methylideneamino] imidazole-4-carboxamide isomerase</fullName>
        <ecNumber evidence="1">5.3.1.16</ecNumber>
    </alternativeName>
    <alternativeName>
        <fullName evidence="1">N-(5'-phosphoribosyl)anthranilate isomerase</fullName>
        <shortName evidence="1">PRAI</shortName>
        <ecNumber evidence="1">5.3.1.24</ecNumber>
    </alternativeName>
    <alternativeName>
        <fullName evidence="1">Phosphoribosylformimino-5-aminoimidazole carboxamide ribotide isomerase</fullName>
    </alternativeName>
</protein>
<proteinExistence type="inferred from homology"/>
<reference key="1">
    <citation type="journal article" date="2008" name="J. Bacteriol.">
        <title>Genome sequence of the streptomycin-producing microorganism Streptomyces griseus IFO 13350.</title>
        <authorList>
            <person name="Ohnishi Y."/>
            <person name="Ishikawa J."/>
            <person name="Hara H."/>
            <person name="Suzuki H."/>
            <person name="Ikenoya M."/>
            <person name="Ikeda H."/>
            <person name="Yamashita A."/>
            <person name="Hattori M."/>
            <person name="Horinouchi S."/>
        </authorList>
    </citation>
    <scope>NUCLEOTIDE SEQUENCE [LARGE SCALE GENOMIC DNA]</scope>
    <source>
        <strain>JCM 4626 / CBS 651.72 / NBRC 13350 / KCC S-0626 / ISP 5235</strain>
    </source>
</reference>
<sequence>MPKLELLPAVDVRDGQAVRLVHGESGSETSYGSPLEAALAWQSAGAEWLHLVDLDAAFGTGDNRALIAEVAGAMDIKVELSGGIRDDASLAAALATGCRRVNLGTAALETPEWVAKVIAEHGDKIAVGLDVRGTTLRGRGWTRDGGDLYETLARLDSEGCARYVVTDIAKDGTLEGPNLGLLRDVCAATDRPVVASGGVSSLDDLRAISLLVPEGVEGAIVGKALYAKAFTLEEALKAVAA</sequence>
<comment type="function">
    <text evidence="1">Involved in both the histidine and tryptophan biosynthetic pathways.</text>
</comment>
<comment type="catalytic activity">
    <reaction evidence="1">
        <text>1-(5-phospho-beta-D-ribosyl)-5-[(5-phospho-beta-D-ribosylamino)methylideneamino]imidazole-4-carboxamide = 5-[(5-phospho-1-deoxy-D-ribulos-1-ylimino)methylamino]-1-(5-phospho-beta-D-ribosyl)imidazole-4-carboxamide</text>
        <dbReference type="Rhea" id="RHEA:15469"/>
        <dbReference type="ChEBI" id="CHEBI:58435"/>
        <dbReference type="ChEBI" id="CHEBI:58525"/>
        <dbReference type="EC" id="5.3.1.16"/>
    </reaction>
</comment>
<comment type="catalytic activity">
    <reaction evidence="1">
        <text>N-(5-phospho-beta-D-ribosyl)anthranilate = 1-(2-carboxyphenylamino)-1-deoxy-D-ribulose 5-phosphate</text>
        <dbReference type="Rhea" id="RHEA:21540"/>
        <dbReference type="ChEBI" id="CHEBI:18277"/>
        <dbReference type="ChEBI" id="CHEBI:58613"/>
        <dbReference type="EC" id="5.3.1.24"/>
    </reaction>
</comment>
<comment type="pathway">
    <text evidence="1">Amino-acid biosynthesis; L-histidine biosynthesis; L-histidine from 5-phospho-alpha-D-ribose 1-diphosphate: step 4/9.</text>
</comment>
<comment type="pathway">
    <text evidence="1">Amino-acid biosynthesis; L-tryptophan biosynthesis; L-tryptophan from chorismate: step 3/5.</text>
</comment>
<comment type="subcellular location">
    <subcellularLocation>
        <location evidence="1">Cytoplasm</location>
    </subcellularLocation>
</comment>
<comment type="similarity">
    <text evidence="1">Belongs to the HisA/HisF family.</text>
</comment>
<name>HIS4_STRGG</name>